<keyword id="KW-0007">Acetylation</keyword>
<keyword id="KW-1003">Cell membrane</keyword>
<keyword id="KW-0449">Lipoprotein</keyword>
<keyword id="KW-0472">Membrane</keyword>
<keyword id="KW-1185">Reference proteome</keyword>
<keyword id="KW-0732">Signal</keyword>
<name>Y2215_HALMD</name>
<comment type="subcellular location">
    <subcellularLocation>
        <location evidence="2">Cell membrane</location>
        <topology evidence="2">Lipid-anchor</topology>
    </subcellularLocation>
</comment>
<comment type="sequence caution" evidence="4">
    <conflict type="erroneous initiation">
        <sequence resource="EMBL-CDS" id="ACV48328"/>
    </conflict>
    <text>Truncated N-terminus.</text>
</comment>
<organism>
    <name type="scientific">Halomicrobium mukohataei (strain ATCC 700874 / DSM 12286 / JCM 9738 / NCIMB 13541)</name>
    <name type="common">Haloarcula mukohataei</name>
    <dbReference type="NCBI Taxonomy" id="485914"/>
    <lineage>
        <taxon>Archaea</taxon>
        <taxon>Methanobacteriati</taxon>
        <taxon>Methanobacteriota</taxon>
        <taxon>Stenosarchaea group</taxon>
        <taxon>Halobacteria</taxon>
        <taxon>Halobacteriales</taxon>
        <taxon>Haloarculaceae</taxon>
        <taxon>Halomicrobium</taxon>
    </lineage>
</organism>
<sequence>MCPRPRRAVLLGLGVAMSAIAGCRETAPSTTQTSDGGPEPTGRSGDTQTDGGGETTRQATVAEGGESATRADETETSELDLREANVVDVTLQSAGGRAVEFSVTLYHDDDGEDGYADWWQVETLAGDRLGRRELLHAHSTAPFTRSETIEVPEGTTCVVVRGHDQTHGYGGQAMVVDTESGATRAVQQGPEPAEFDDGDCP</sequence>
<dbReference type="EMBL" id="CP001688">
    <property type="protein sequence ID" value="ACV48328.1"/>
    <property type="status" value="ALT_INIT"/>
    <property type="molecule type" value="Genomic_DNA"/>
</dbReference>
<dbReference type="STRING" id="485914.Hmuk_2215"/>
<dbReference type="KEGG" id="hmu:Hmuk_2215"/>
<dbReference type="eggNOG" id="arCOG08156">
    <property type="taxonomic scope" value="Archaea"/>
</dbReference>
<dbReference type="HOGENOM" id="CLU_109221_0_0_2"/>
<dbReference type="OrthoDB" id="189787at2157"/>
<dbReference type="Proteomes" id="UP000001746">
    <property type="component" value="Chromosome"/>
</dbReference>
<dbReference type="GO" id="GO:0005886">
    <property type="term" value="C:plasma membrane"/>
    <property type="evidence" value="ECO:0007669"/>
    <property type="project" value="UniProtKB-SubCell"/>
</dbReference>
<dbReference type="PROSITE" id="PS51257">
    <property type="entry name" value="PROKAR_LIPOPROTEIN"/>
    <property type="match status" value="1"/>
</dbReference>
<reference key="1">
    <citation type="journal article" date="2009" name="Stand. Genomic Sci.">
        <title>Complete genome sequence of Halomicrobium mukohataei type strain (arg-2).</title>
        <authorList>
            <person name="Tindall B.J."/>
            <person name="Schneider S."/>
            <person name="Lapidus A."/>
            <person name="Copeland A."/>
            <person name="Glavina Del Rio T."/>
            <person name="Nolan M."/>
            <person name="Lucas S."/>
            <person name="Chen F."/>
            <person name="Tice H."/>
            <person name="Cheng J.F."/>
            <person name="Saunders E."/>
            <person name="Bruce D."/>
            <person name="Goodwin L."/>
            <person name="Pitluck S."/>
            <person name="Mikhailova N."/>
            <person name="Pati A."/>
            <person name="Ivanova N."/>
            <person name="Mavrommatis K."/>
            <person name="Chen A."/>
            <person name="Palaniappan K."/>
            <person name="Chain P."/>
            <person name="Land M."/>
            <person name="Hauser L."/>
            <person name="Chang Y.J."/>
            <person name="Jeffries C.D."/>
            <person name="Brettin T."/>
            <person name="Han C."/>
            <person name="Rohde M."/>
            <person name="Goker M."/>
            <person name="Bristow J."/>
            <person name="Eisen J.A."/>
            <person name="Markowitz V."/>
            <person name="Hugenholtz P."/>
            <person name="Klenk H.P."/>
            <person name="Kyrpides N.C."/>
            <person name="Detter J.C."/>
        </authorList>
    </citation>
    <scope>NUCLEOTIDE SEQUENCE [LARGE SCALE GENOMIC DNA]</scope>
    <source>
        <strain>ATCC 700874 / DSM 12286 / JCM 9738 / NCIMB 13541</strain>
    </source>
</reference>
<gene>
    <name type="ordered locus">Hmuk_2215</name>
</gene>
<evidence type="ECO:0000255" key="1"/>
<evidence type="ECO:0000255" key="2">
    <source>
        <dbReference type="PROSITE-ProRule" id="PRU00303"/>
    </source>
</evidence>
<evidence type="ECO:0000256" key="3">
    <source>
        <dbReference type="SAM" id="MobiDB-lite"/>
    </source>
</evidence>
<evidence type="ECO:0000305" key="4"/>
<feature type="signal peptide" evidence="2">
    <location>
        <begin position="1"/>
        <end position="22"/>
    </location>
</feature>
<feature type="chain" id="PRO_0000411962" description="Putative lipoprotein Hmuk_2215">
    <location>
        <begin position="23"/>
        <end position="201"/>
    </location>
</feature>
<feature type="region of interest" description="Disordered" evidence="3">
    <location>
        <begin position="25"/>
        <end position="78"/>
    </location>
</feature>
<feature type="region of interest" description="Disordered" evidence="3">
    <location>
        <begin position="182"/>
        <end position="201"/>
    </location>
</feature>
<feature type="compositionally biased region" description="Basic and acidic residues" evidence="3">
    <location>
        <begin position="69"/>
        <end position="78"/>
    </location>
</feature>
<feature type="modified residue" description="N-acetylcysteine" evidence="1">
    <location>
        <position position="23"/>
    </location>
</feature>
<feature type="lipid moiety-binding region" description="S-archaeol cysteine" evidence="1">
    <location>
        <position position="23"/>
    </location>
</feature>
<accession>C7NWW8</accession>
<proteinExistence type="inferred from homology"/>
<protein>
    <recommendedName>
        <fullName>Putative lipoprotein Hmuk_2215</fullName>
    </recommendedName>
</protein>